<protein>
    <recommendedName>
        <fullName>Nitric oxide synthase, inducible</fullName>
        <ecNumber evidence="4">1.14.13.39</ecNumber>
    </recommendedName>
    <alternativeName>
        <fullName>Inducible NO synthase</fullName>
        <shortName>Inducible NOS</shortName>
        <shortName>iNOS</shortName>
    </alternativeName>
    <alternativeName>
        <fullName>NOS type II</fullName>
    </alternativeName>
    <alternativeName>
        <fullName>Peptidyl-cysteine S-nitrosylase NOS2</fullName>
    </alternativeName>
</protein>
<comment type="function">
    <text evidence="4">Produces nitric oxide (NO) which is a messenger molecule with diverse functions throughout the body. In macrophages, NO mediates tumoricidal and bactericidal actions. Also has nitrosylase activity and mediates cysteine S-nitrosylation of cytoplasmic target proteins such COX2 (By similarity).</text>
</comment>
<comment type="catalytic activity">
    <reaction evidence="4">
        <text>2 L-arginine + 3 NADPH + 4 O2 + H(+) = 2 L-citrulline + 2 nitric oxide + 3 NADP(+) + 4 H2O</text>
        <dbReference type="Rhea" id="RHEA:19897"/>
        <dbReference type="ChEBI" id="CHEBI:15377"/>
        <dbReference type="ChEBI" id="CHEBI:15378"/>
        <dbReference type="ChEBI" id="CHEBI:15379"/>
        <dbReference type="ChEBI" id="CHEBI:16480"/>
        <dbReference type="ChEBI" id="CHEBI:32682"/>
        <dbReference type="ChEBI" id="CHEBI:57743"/>
        <dbReference type="ChEBI" id="CHEBI:57783"/>
        <dbReference type="ChEBI" id="CHEBI:58349"/>
        <dbReference type="EC" id="1.14.13.39"/>
    </reaction>
    <physiologicalReaction direction="left-to-right" evidence="4">
        <dbReference type="Rhea" id="RHEA:19898"/>
    </physiologicalReaction>
</comment>
<comment type="cofactor">
    <cofactor evidence="4">
        <name>heme b</name>
        <dbReference type="ChEBI" id="CHEBI:60344"/>
    </cofactor>
</comment>
<comment type="cofactor">
    <cofactor evidence="3">
        <name>FAD</name>
        <dbReference type="ChEBI" id="CHEBI:57692"/>
    </cofactor>
    <text evidence="3">Binds 1 FAD.</text>
</comment>
<comment type="cofactor">
    <cofactor evidence="4">
        <name>FMN</name>
        <dbReference type="ChEBI" id="CHEBI:58210"/>
    </cofactor>
    <text evidence="4">Binds 1 FMN.</text>
</comment>
<comment type="cofactor">
    <cofactor evidence="4">
        <name>(6R)-L-erythro-5,6,7,8-tetrahydrobiopterin</name>
        <dbReference type="ChEBI" id="CHEBI:59560"/>
    </cofactor>
    <text evidence="4">Tetrahydrobiopterin (BH4). May stabilize the dimeric form of the enzyme.</text>
</comment>
<comment type="activity regulation">
    <text evidence="1">Not stimulated by calcium/calmodulin.</text>
</comment>
<comment type="subunit">
    <text evidence="4">Homodimer.</text>
</comment>
<comment type="subcellular location">
    <subcellularLocation>
        <location evidence="4">Cytoplasm</location>
        <location evidence="4">Cytosol</location>
    </subcellularLocation>
</comment>
<comment type="similarity">
    <text evidence="6">Belongs to the NOS family.</text>
</comment>
<proteinExistence type="evidence at transcript level"/>
<dbReference type="EC" id="1.14.13.39" evidence="4"/>
<dbReference type="EMBL" id="X97013">
    <property type="protein sequence ID" value="CAA65736.1"/>
    <property type="molecule type" value="mRNA"/>
</dbReference>
<dbReference type="SMR" id="Q92091"/>
<dbReference type="SABIO-RK" id="Q92091"/>
<dbReference type="Proteomes" id="UP000694395">
    <property type="component" value="Unplaced"/>
</dbReference>
<dbReference type="GO" id="GO:0005829">
    <property type="term" value="C:cytosol"/>
    <property type="evidence" value="ECO:0007669"/>
    <property type="project" value="UniProtKB-SubCell"/>
</dbReference>
<dbReference type="GO" id="GO:0005516">
    <property type="term" value="F:calmodulin binding"/>
    <property type="evidence" value="ECO:0007669"/>
    <property type="project" value="UniProtKB-KW"/>
</dbReference>
<dbReference type="GO" id="GO:0010181">
    <property type="term" value="F:FMN binding"/>
    <property type="evidence" value="ECO:0007669"/>
    <property type="project" value="InterPro"/>
</dbReference>
<dbReference type="GO" id="GO:0046872">
    <property type="term" value="F:metal ion binding"/>
    <property type="evidence" value="ECO:0007669"/>
    <property type="project" value="UniProtKB-KW"/>
</dbReference>
<dbReference type="GO" id="GO:0004517">
    <property type="term" value="F:nitric-oxide synthase activity"/>
    <property type="evidence" value="ECO:0000250"/>
    <property type="project" value="UniProtKB"/>
</dbReference>
<dbReference type="GO" id="GO:0006809">
    <property type="term" value="P:nitric oxide biosynthetic process"/>
    <property type="evidence" value="ECO:0007669"/>
    <property type="project" value="InterPro"/>
</dbReference>
<dbReference type="GO" id="GO:0018119">
    <property type="term" value="P:peptidyl-cysteine S-nitrosylation"/>
    <property type="evidence" value="ECO:0000250"/>
    <property type="project" value="UniProtKB"/>
</dbReference>
<dbReference type="FunFam" id="3.40.50.360:FF:000039">
    <property type="entry name" value="Nitric oxide synthase"/>
    <property type="match status" value="1"/>
</dbReference>
<dbReference type="FunFam" id="2.40.30.10:FF:000308">
    <property type="entry name" value="Nitric oxide synthase, inducible"/>
    <property type="match status" value="1"/>
</dbReference>
<dbReference type="Gene3D" id="3.40.50.360">
    <property type="match status" value="2"/>
</dbReference>
<dbReference type="Gene3D" id="6.10.250.410">
    <property type="match status" value="1"/>
</dbReference>
<dbReference type="Gene3D" id="1.20.990.10">
    <property type="entry name" value="NADPH-cytochrome p450 Reductase, Chain A, domain 3"/>
    <property type="match status" value="1"/>
</dbReference>
<dbReference type="Gene3D" id="3.90.340.10">
    <property type="entry name" value="Nitric Oxide Synthase, Chain A, domain 1"/>
    <property type="match status" value="1"/>
</dbReference>
<dbReference type="Gene3D" id="3.90.1230.10">
    <property type="entry name" value="Nitric Oxide Synthase, Chain A, domain 3"/>
    <property type="match status" value="1"/>
</dbReference>
<dbReference type="Gene3D" id="2.40.30.10">
    <property type="entry name" value="Translation factors"/>
    <property type="match status" value="1"/>
</dbReference>
<dbReference type="InterPro" id="IPR003097">
    <property type="entry name" value="CysJ-like_FAD-binding"/>
</dbReference>
<dbReference type="InterPro" id="IPR001094">
    <property type="entry name" value="Flavdoxin-like"/>
</dbReference>
<dbReference type="InterPro" id="IPR008254">
    <property type="entry name" value="Flavodoxin/NO_synth"/>
</dbReference>
<dbReference type="InterPro" id="IPR029039">
    <property type="entry name" value="Flavoprotein-like_sf"/>
</dbReference>
<dbReference type="InterPro" id="IPR023173">
    <property type="entry name" value="NADPH_Cyt_P450_Rdtase_alpha"/>
</dbReference>
<dbReference type="InterPro" id="IPR050607">
    <property type="entry name" value="NOS"/>
</dbReference>
<dbReference type="InterPro" id="IPR044943">
    <property type="entry name" value="NOS_dom_1"/>
</dbReference>
<dbReference type="InterPro" id="IPR044944">
    <property type="entry name" value="NOS_dom_3"/>
</dbReference>
<dbReference type="InterPro" id="IPR004030">
    <property type="entry name" value="NOS_N"/>
</dbReference>
<dbReference type="InterPro" id="IPR036119">
    <property type="entry name" value="NOS_N_sf"/>
</dbReference>
<dbReference type="InterPro" id="IPR017938">
    <property type="entry name" value="Riboflavin_synthase-like_b-brl"/>
</dbReference>
<dbReference type="PANTHER" id="PTHR43410:SF4">
    <property type="entry name" value="NITRIC OXIDE SYNTHASE"/>
    <property type="match status" value="1"/>
</dbReference>
<dbReference type="PANTHER" id="PTHR43410">
    <property type="entry name" value="NITRIC OXIDE SYNTHASE OXYGENASE"/>
    <property type="match status" value="1"/>
</dbReference>
<dbReference type="Pfam" id="PF00667">
    <property type="entry name" value="FAD_binding_1"/>
    <property type="match status" value="1"/>
</dbReference>
<dbReference type="Pfam" id="PF00258">
    <property type="entry name" value="Flavodoxin_1"/>
    <property type="match status" value="1"/>
</dbReference>
<dbReference type="Pfam" id="PF02898">
    <property type="entry name" value="NO_synthase"/>
    <property type="match status" value="1"/>
</dbReference>
<dbReference type="PRINTS" id="PR00369">
    <property type="entry name" value="FLAVODOXIN"/>
</dbReference>
<dbReference type="SUPFAM" id="SSF52218">
    <property type="entry name" value="Flavoproteins"/>
    <property type="match status" value="1"/>
</dbReference>
<dbReference type="SUPFAM" id="SSF56512">
    <property type="entry name" value="Nitric oxide (NO) synthase oxygenase domain"/>
    <property type="match status" value="1"/>
</dbReference>
<dbReference type="SUPFAM" id="SSF63380">
    <property type="entry name" value="Riboflavin synthase domain-like"/>
    <property type="match status" value="1"/>
</dbReference>
<dbReference type="PROSITE" id="PS50902">
    <property type="entry name" value="FLAVODOXIN_LIKE"/>
    <property type="match status" value="1"/>
</dbReference>
<keyword id="KW-0112">Calmodulin-binding</keyword>
<keyword id="KW-0963">Cytoplasm</keyword>
<keyword id="KW-0274">FAD</keyword>
<keyword id="KW-0285">Flavoprotein</keyword>
<keyword id="KW-0288">FMN</keyword>
<keyword id="KW-0349">Heme</keyword>
<keyword id="KW-0408">Iron</keyword>
<keyword id="KW-0479">Metal-binding</keyword>
<keyword id="KW-0521">NADP</keyword>
<keyword id="KW-0560">Oxidoreductase</keyword>
<gene>
    <name type="primary">nos2</name>
</gene>
<organism>
    <name type="scientific">Oncorhynchus mykiss</name>
    <name type="common">Rainbow trout</name>
    <name type="synonym">Salmo gairdneri</name>
    <dbReference type="NCBI Taxonomy" id="8022"/>
    <lineage>
        <taxon>Eukaryota</taxon>
        <taxon>Metazoa</taxon>
        <taxon>Chordata</taxon>
        <taxon>Craniata</taxon>
        <taxon>Vertebrata</taxon>
        <taxon>Euteleostomi</taxon>
        <taxon>Actinopterygii</taxon>
        <taxon>Neopterygii</taxon>
        <taxon>Teleostei</taxon>
        <taxon>Protacanthopterygii</taxon>
        <taxon>Salmoniformes</taxon>
        <taxon>Salmonidae</taxon>
        <taxon>Salmoninae</taxon>
        <taxon>Oncorhynchus</taxon>
    </lineage>
</organism>
<feature type="chain" id="PRO_0000170939" description="Nitric oxide synthase, inducible">
    <location>
        <begin position="1" status="less than"/>
        <end position="470" status="greater than"/>
    </location>
</feature>
<feature type="domain" description="Flavodoxin-like" evidence="5">
    <location>
        <begin position="169"/>
        <end position="307"/>
    </location>
</feature>
<feature type="region of interest" description="Calmodulin-binding" evidence="4">
    <location>
        <begin position="145"/>
        <end position="165"/>
    </location>
</feature>
<feature type="binding site" evidence="2">
    <location>
        <position position="2"/>
    </location>
    <ligand>
        <name>L-arginine</name>
        <dbReference type="ChEBI" id="CHEBI:32682"/>
    </ligand>
</feature>
<feature type="binding site" evidence="2">
    <location>
        <position position="3"/>
    </location>
    <ligand>
        <name>L-arginine</name>
        <dbReference type="ChEBI" id="CHEBI:32682"/>
    </ligand>
</feature>
<feature type="binding site" evidence="2">
    <location>
        <position position="7"/>
    </location>
    <ligand>
        <name>L-arginine</name>
        <dbReference type="ChEBI" id="CHEBI:32682"/>
    </ligand>
</feature>
<feature type="binding site" evidence="4">
    <location>
        <position position="11"/>
    </location>
    <ligand>
        <name>(6R)-L-erythro-5,6,7,8-tetrahydrobiopterin</name>
        <dbReference type="ChEBI" id="CHEBI:59560"/>
    </ligand>
</feature>
<feature type="binding site" evidence="2">
    <location>
        <position position="93"/>
    </location>
    <ligand>
        <name>(6R)-L-erythro-5,6,7,8-tetrahydrobiopterin</name>
        <dbReference type="ChEBI" id="CHEBI:59560"/>
    </ligand>
</feature>
<feature type="binding site" evidence="2">
    <location>
        <position position="106"/>
    </location>
    <ligand>
        <name>(6R)-L-erythro-5,6,7,8-tetrahydrobiopterin</name>
        <dbReference type="ChEBI" id="CHEBI:59560"/>
    </ligand>
</feature>
<feature type="binding site" evidence="2">
    <location>
        <position position="121"/>
    </location>
    <ligand>
        <name>heme b</name>
        <dbReference type="ChEBI" id="CHEBI:60344"/>
    </ligand>
</feature>
<feature type="binding site" evidence="4">
    <location>
        <position position="175"/>
    </location>
    <ligand>
        <name>FMN</name>
        <dbReference type="ChEBI" id="CHEBI:58210"/>
    </ligand>
</feature>
<feature type="binding site" evidence="4">
    <location>
        <position position="176"/>
    </location>
    <ligand>
        <name>FMN</name>
        <dbReference type="ChEBI" id="CHEBI:58210"/>
    </ligand>
</feature>
<feature type="binding site" evidence="4">
    <location>
        <position position="177"/>
    </location>
    <ligand>
        <name>FMN</name>
        <dbReference type="ChEBI" id="CHEBI:58210"/>
    </ligand>
</feature>
<feature type="binding site" evidence="4">
    <location>
        <position position="179"/>
    </location>
    <ligand>
        <name>FMN</name>
        <dbReference type="ChEBI" id="CHEBI:58210"/>
    </ligand>
</feature>
<feature type="binding site" evidence="4">
    <location>
        <position position="180"/>
    </location>
    <ligand>
        <name>FMN</name>
        <dbReference type="ChEBI" id="CHEBI:58210"/>
    </ligand>
</feature>
<feature type="binding site" evidence="4">
    <location>
        <position position="221"/>
    </location>
    <ligand>
        <name>FMN</name>
        <dbReference type="ChEBI" id="CHEBI:58210"/>
    </ligand>
</feature>
<feature type="binding site" evidence="4">
    <location>
        <position position="222"/>
    </location>
    <ligand>
        <name>FMN</name>
        <dbReference type="ChEBI" id="CHEBI:58210"/>
    </ligand>
</feature>
<feature type="binding site" evidence="4">
    <location>
        <position position="258"/>
    </location>
    <ligand>
        <name>FMN</name>
        <dbReference type="ChEBI" id="CHEBI:58210"/>
    </ligand>
</feature>
<feature type="binding site" evidence="4">
    <location>
        <position position="265"/>
    </location>
    <ligand>
        <name>FMN</name>
        <dbReference type="ChEBI" id="CHEBI:58210"/>
    </ligand>
</feature>
<feature type="binding site" evidence="4">
    <location>
        <position position="291"/>
    </location>
    <ligand>
        <name>FMN</name>
        <dbReference type="ChEBI" id="CHEBI:58210"/>
    </ligand>
</feature>
<feature type="binding site" evidence="4">
    <location>
        <position position="295"/>
    </location>
    <ligand>
        <name>FMN</name>
        <dbReference type="ChEBI" id="CHEBI:58210"/>
    </ligand>
</feature>
<feature type="binding site" evidence="3">
    <location>
        <position position="380"/>
    </location>
    <ligand>
        <name>NADP(+)</name>
        <dbReference type="ChEBI" id="CHEBI:58349"/>
    </ligand>
</feature>
<feature type="binding site" evidence="3">
    <location>
        <position position="403"/>
    </location>
    <ligand>
        <name>FAD</name>
        <dbReference type="ChEBI" id="CHEBI:57692"/>
    </ligand>
</feature>
<feature type="binding site" evidence="3">
    <location>
        <position position="440"/>
    </location>
    <ligand>
        <name>NADP(+)</name>
        <dbReference type="ChEBI" id="CHEBI:58349"/>
    </ligand>
</feature>
<feature type="non-terminal residue">
    <location>
        <position position="1"/>
    </location>
</feature>
<feature type="non-terminal residue">
    <location>
        <position position="470"/>
    </location>
</feature>
<sequence length="470" mass="53329">GWYMGTEIGVRDFCDYQRYNILEEVGRRMGLETHKLSSLWKDQALVTINVAVTYSFQKNKVIITDHHSAAESFMKHLETEFPPARRLPADWDWLVPPMSGSLTPIFHQEMVNYILSPFFYYQPDPWMTHVWRNGEMCLKKQQISFKAVARAALFSSTLMSRVLANRVRCTVLYATETGKSQTLAQRLNSMLNCAFNSRLLCMEDYNFSDMEQESLLVVVMSTFGNGGSPGNGESFKKQLFSLQYLRNKSRYCVFGLGSRMYPQFCAFAHAVDAKLEELGAERVTPTGEGDELNGQEEAFSAWALTALKDAYKEFKIQGQLSLQLPGAERFCEAWDPLRHRVAVESCPQDRITALSAIHSKAVLPMKLKSKHNLQSPQSSRSTILVELERERSPEVMDFAPGDHVGVFPGNLPQLVAGILKFLPQTPPTNQCLRLGYRSDTFRVMRKTGRLLDASQHSLCLRHSPTSWTLP</sequence>
<evidence type="ECO:0000250" key="1"/>
<evidence type="ECO:0000250" key="2">
    <source>
        <dbReference type="UniProtKB" id="P29474"/>
    </source>
</evidence>
<evidence type="ECO:0000250" key="3">
    <source>
        <dbReference type="UniProtKB" id="P29476"/>
    </source>
</evidence>
<evidence type="ECO:0000250" key="4">
    <source>
        <dbReference type="UniProtKB" id="P35228"/>
    </source>
</evidence>
<evidence type="ECO:0000255" key="5">
    <source>
        <dbReference type="PROSITE-ProRule" id="PRU00088"/>
    </source>
</evidence>
<evidence type="ECO:0000305" key="6"/>
<accession>Q92091</accession>
<name>NOS2_ONCMY</name>
<reference key="1">
    <citation type="book" date="1996" name="4th International meeting on the biology of nitric oxide, Amelia Island, Florida, Sep. 1995">
        <title>Detection of mRNA for a nitric oxide synthase in macrophages and gill of rainbow trout challenged with an attenuated bacterial pathogen.</title>
        <editorList>
            <person name="Moncada S."/>
            <person name="Stamler J."/>
            <person name="Gross S."/>
            <person name="Higgs E.A."/>
        </editorList>
        <authorList>
            <person name="Grabowski P.S."/>
            <person name="Laing K.J."/>
            <person name="Hardie L."/>
            <person name="Macguigan F."/>
            <person name="Ralston S."/>
            <person name="Secombes C.J."/>
        </authorList>
    </citation>
    <scope>NUCLEOTIDE SEQUENCE [MRNA]</scope>
</reference>